<comment type="function">
    <text>Tubulin is the major constituent of microtubules, a cylinder consisting of laterally associated linear protofilaments composed of alpha- and beta-tubulin heterodimers. Microtubules grow by the addition of GTP-tubulin dimers to the microtubule end, where a stabilizing cap forms. Below the cap, tubulin dimers are in GDP-bound state, owing to GTPase activity of alpha-tubulin.</text>
</comment>
<comment type="cofactor">
    <cofactor evidence="1">
        <name>Mg(2+)</name>
        <dbReference type="ChEBI" id="CHEBI:18420"/>
    </cofactor>
</comment>
<comment type="subunit">
    <text>Dimer of alpha and beta chains. A typical microtubule is a hollow water-filled tube with an outer diameter of 25 nm and an inner diameter of 15 nM. Alpha-beta heterodimers associate head-to-tail to form protofilaments running lengthwise along the microtubule wall with the beta-tubulin subunit facing the microtubule plus end conferring a structural polarity. Microtubules usually have 13 protofilaments but different protofilament numbers can be found in some organisms and specialized cells.</text>
</comment>
<comment type="subcellular location">
    <subcellularLocation>
        <location>Cytoplasm</location>
        <location>Cytoskeleton</location>
    </subcellularLocation>
</comment>
<comment type="miscellaneous">
    <text>E.nidulans has two beta-tubulin genes: benA and tubC; tubC is expressed exclusively during the events of asexual sporulation (conidiation).</text>
</comment>
<comment type="similarity">
    <text evidence="4">Belongs to the tubulin family.</text>
</comment>
<feature type="chain" id="PRO_0000048407" description="Tubulin beta-2 chain">
    <location>
        <begin position="1"/>
        <end position="449"/>
    </location>
</feature>
<feature type="binding site" evidence="2">
    <location>
        <position position="11"/>
    </location>
    <ligand>
        <name>GTP</name>
        <dbReference type="ChEBI" id="CHEBI:37565"/>
    </ligand>
</feature>
<feature type="binding site" evidence="1">
    <location>
        <position position="69"/>
    </location>
    <ligand>
        <name>GTP</name>
        <dbReference type="ChEBI" id="CHEBI:37565"/>
    </ligand>
</feature>
<feature type="binding site" evidence="1">
    <location>
        <position position="69"/>
    </location>
    <ligand>
        <name>Mg(2+)</name>
        <dbReference type="ChEBI" id="CHEBI:18420"/>
    </ligand>
</feature>
<feature type="binding site" evidence="2">
    <location>
        <position position="138"/>
    </location>
    <ligand>
        <name>GTP</name>
        <dbReference type="ChEBI" id="CHEBI:37565"/>
    </ligand>
</feature>
<feature type="binding site" evidence="2">
    <location>
        <position position="142"/>
    </location>
    <ligand>
        <name>GTP</name>
        <dbReference type="ChEBI" id="CHEBI:37565"/>
    </ligand>
</feature>
<feature type="binding site" evidence="2">
    <location>
        <position position="143"/>
    </location>
    <ligand>
        <name>GTP</name>
        <dbReference type="ChEBI" id="CHEBI:37565"/>
    </ligand>
</feature>
<feature type="binding site" evidence="2">
    <location>
        <position position="144"/>
    </location>
    <ligand>
        <name>GTP</name>
        <dbReference type="ChEBI" id="CHEBI:37565"/>
    </ligand>
</feature>
<feature type="binding site" evidence="2">
    <location>
        <position position="204"/>
    </location>
    <ligand>
        <name>GTP</name>
        <dbReference type="ChEBI" id="CHEBI:37565"/>
    </ligand>
</feature>
<feature type="binding site" evidence="2">
    <location>
        <position position="226"/>
    </location>
    <ligand>
        <name>GTP</name>
        <dbReference type="ChEBI" id="CHEBI:37565"/>
    </ligand>
</feature>
<feature type="modified residue" description="Methylhistidine" evidence="3">
    <location>
        <position position="137"/>
    </location>
</feature>
<feature type="sequence conflict" description="In Ref. 1; AAA33329." evidence="4" ref="1">
    <original>W</original>
    <variation>C</variation>
    <location>
        <position position="101"/>
    </location>
</feature>
<feature type="sequence conflict" description="In Ref. 1; AAA33329." evidence="4" ref="1">
    <original>G</original>
    <variation>A</variation>
    <location>
        <position position="132"/>
    </location>
</feature>
<name>TBB2_EMENI</name>
<gene>
    <name type="primary">tubC</name>
    <name type="ORF">AN6838</name>
</gene>
<organism>
    <name type="scientific">Emericella nidulans (strain FGSC A4 / ATCC 38163 / CBS 112.46 / NRRL 194 / M139)</name>
    <name type="common">Aspergillus nidulans</name>
    <dbReference type="NCBI Taxonomy" id="227321"/>
    <lineage>
        <taxon>Eukaryota</taxon>
        <taxon>Fungi</taxon>
        <taxon>Dikarya</taxon>
        <taxon>Ascomycota</taxon>
        <taxon>Pezizomycotina</taxon>
        <taxon>Eurotiomycetes</taxon>
        <taxon>Eurotiomycetidae</taxon>
        <taxon>Eurotiales</taxon>
        <taxon>Aspergillaceae</taxon>
        <taxon>Aspergillus</taxon>
        <taxon>Aspergillus subgen. Nidulantes</taxon>
    </lineage>
</organism>
<proteinExistence type="evidence at protein level"/>
<sequence>MREIVHLQTGQCGNQVGSAFWQTISGEHGLDASGIYTGDSDLQLERMNVYFNEAGGNKYVPRAVLIDLEPGTMDALRSGPNGALYRPDNFIYGQSSAGNNWAKGHYTEGAELVDQVIDVVRREAESCDCLQGFQVTHSLGGGTGSGMGTLLISKIREEFPDRMMATFSVMPSPKVSDTVVEPYNATLSVHQLVEHSDETFCLDNDALYDICIRTLKLSSPSYGDLNHLVSAVMSGITVSLRFPGQLNSDLRKLAVNMVPFPRLHFFMVGFAPLTSRSSSSFRTISVPELTQQMFDSRNMMTAANYQNGRFLTCSTLFRGKVAMKEVEDQMRNMQNKYSSYFVEWIPNNVQTALCSMPPKGLKMAATFVGNSTSVQELFNRVSNQFTAMFRRKAFLHWYTGEGMDEMEFTEAESNMNDLMSEYQQYQEATVSDGEGAYDAEEGEAYEQEE</sequence>
<keyword id="KW-0183">Conidiation</keyword>
<keyword id="KW-0963">Cytoplasm</keyword>
<keyword id="KW-0206">Cytoskeleton</keyword>
<keyword id="KW-0342">GTP-binding</keyword>
<keyword id="KW-0460">Magnesium</keyword>
<keyword id="KW-0479">Metal-binding</keyword>
<keyword id="KW-0488">Methylation</keyword>
<keyword id="KW-0493">Microtubule</keyword>
<keyword id="KW-0547">Nucleotide-binding</keyword>
<keyword id="KW-1185">Reference proteome</keyword>
<keyword id="KW-0749">Sporulation</keyword>
<reference key="1">
    <citation type="journal article" date="1987" name="Gene">
        <title>Aspergillus nidulans beta-tubulin genes are unusually divergent.</title>
        <authorList>
            <person name="May G.S."/>
            <person name="Tsang M.L.-S."/>
            <person name="Smith H."/>
            <person name="Fidel S."/>
            <person name="Morris N.R."/>
        </authorList>
    </citation>
    <scope>NUCLEOTIDE SEQUENCE [GENOMIC DNA]</scope>
</reference>
<reference key="2">
    <citation type="journal article" date="2005" name="Nature">
        <title>Sequencing of Aspergillus nidulans and comparative analysis with A. fumigatus and A. oryzae.</title>
        <authorList>
            <person name="Galagan J.E."/>
            <person name="Calvo S.E."/>
            <person name="Cuomo C."/>
            <person name="Ma L.-J."/>
            <person name="Wortman J.R."/>
            <person name="Batzoglou S."/>
            <person name="Lee S.-I."/>
            <person name="Bastuerkmen M."/>
            <person name="Spevak C.C."/>
            <person name="Clutterbuck J."/>
            <person name="Kapitonov V."/>
            <person name="Jurka J."/>
            <person name="Scazzocchio C."/>
            <person name="Farman M.L."/>
            <person name="Butler J."/>
            <person name="Purcell S."/>
            <person name="Harris S."/>
            <person name="Braus G.H."/>
            <person name="Draht O."/>
            <person name="Busch S."/>
            <person name="D'Enfert C."/>
            <person name="Bouchier C."/>
            <person name="Goldman G.H."/>
            <person name="Bell-Pedersen D."/>
            <person name="Griffiths-Jones S."/>
            <person name="Doonan J.H."/>
            <person name="Yu J."/>
            <person name="Vienken K."/>
            <person name="Pain A."/>
            <person name="Freitag M."/>
            <person name="Selker E.U."/>
            <person name="Archer D.B."/>
            <person name="Penalva M.A."/>
            <person name="Oakley B.R."/>
            <person name="Momany M."/>
            <person name="Tanaka T."/>
            <person name="Kumagai T."/>
            <person name="Asai K."/>
            <person name="Machida M."/>
            <person name="Nierman W.C."/>
            <person name="Denning D.W."/>
            <person name="Caddick M.X."/>
            <person name="Hynes M."/>
            <person name="Paoletti M."/>
            <person name="Fischer R."/>
            <person name="Miller B.L."/>
            <person name="Dyer P.S."/>
            <person name="Sachs M.S."/>
            <person name="Osmani S.A."/>
            <person name="Birren B.W."/>
        </authorList>
    </citation>
    <scope>NUCLEOTIDE SEQUENCE [LARGE SCALE GENOMIC DNA]</scope>
    <source>
        <strain>FGSC A4 / ATCC 38163 / CBS 112.46 / NRRL 194 / M139</strain>
    </source>
</reference>
<reference key="3">
    <citation type="journal article" date="2009" name="Fungal Genet. Biol.">
        <title>The 2008 update of the Aspergillus nidulans genome annotation: a community effort.</title>
        <authorList>
            <person name="Wortman J.R."/>
            <person name="Gilsenan J.M."/>
            <person name="Joardar V."/>
            <person name="Deegan J."/>
            <person name="Clutterbuck J."/>
            <person name="Andersen M.R."/>
            <person name="Archer D."/>
            <person name="Bencina M."/>
            <person name="Braus G."/>
            <person name="Coutinho P."/>
            <person name="von Dohren H."/>
            <person name="Doonan J."/>
            <person name="Driessen A.J."/>
            <person name="Durek P."/>
            <person name="Espeso E."/>
            <person name="Fekete E."/>
            <person name="Flipphi M."/>
            <person name="Estrada C.G."/>
            <person name="Geysens S."/>
            <person name="Goldman G."/>
            <person name="de Groot P.W."/>
            <person name="Hansen K."/>
            <person name="Harris S.D."/>
            <person name="Heinekamp T."/>
            <person name="Helmstaedt K."/>
            <person name="Henrissat B."/>
            <person name="Hofmann G."/>
            <person name="Homan T."/>
            <person name="Horio T."/>
            <person name="Horiuchi H."/>
            <person name="James S."/>
            <person name="Jones M."/>
            <person name="Karaffa L."/>
            <person name="Karanyi Z."/>
            <person name="Kato M."/>
            <person name="Keller N."/>
            <person name="Kelly D.E."/>
            <person name="Kiel J.A."/>
            <person name="Kim J.M."/>
            <person name="van der Klei I.J."/>
            <person name="Klis F.M."/>
            <person name="Kovalchuk A."/>
            <person name="Krasevec N."/>
            <person name="Kubicek C.P."/>
            <person name="Liu B."/>
            <person name="Maccabe A."/>
            <person name="Meyer V."/>
            <person name="Mirabito P."/>
            <person name="Miskei M."/>
            <person name="Mos M."/>
            <person name="Mullins J."/>
            <person name="Nelson D.R."/>
            <person name="Nielsen J."/>
            <person name="Oakley B.R."/>
            <person name="Osmani S.A."/>
            <person name="Pakula T."/>
            <person name="Paszewski A."/>
            <person name="Paulsen I."/>
            <person name="Pilsyk S."/>
            <person name="Pocsi I."/>
            <person name="Punt P.J."/>
            <person name="Ram A.F."/>
            <person name="Ren Q."/>
            <person name="Robellet X."/>
            <person name="Robson G."/>
            <person name="Seiboth B."/>
            <person name="van Solingen P."/>
            <person name="Specht T."/>
            <person name="Sun J."/>
            <person name="Taheri-Talesh N."/>
            <person name="Takeshita N."/>
            <person name="Ussery D."/>
            <person name="vanKuyk P.A."/>
            <person name="Visser H."/>
            <person name="van de Vondervoort P.J."/>
            <person name="de Vries R.P."/>
            <person name="Walton J."/>
            <person name="Xiang X."/>
            <person name="Xiong Y."/>
            <person name="Zeng A.P."/>
            <person name="Brandt B.W."/>
            <person name="Cornell M.J."/>
            <person name="van den Hondel C.A."/>
            <person name="Visser J."/>
            <person name="Oliver S.G."/>
            <person name="Turner G."/>
        </authorList>
    </citation>
    <scope>GENOME REANNOTATION</scope>
    <source>
        <strain>FGSC A4 / ATCC 38163 / CBS 112.46 / NRRL 194 / M139</strain>
    </source>
</reference>
<reference key="4">
    <citation type="journal article" date="2023" name="Nat. Commun.">
        <title>A seven-transmembrane methyltransferase catalysing N-terminal histidine methylation of lytic polysaccharide monooxygenases.</title>
        <authorList>
            <person name="Batth T.S."/>
            <person name="Simonsen J.L."/>
            <person name="Hernandez-Rollan C."/>
            <person name="Brander S."/>
            <person name="Morth J.P."/>
            <person name="Johansen K.S."/>
            <person name="Noerholm M.H.H."/>
            <person name="Hoof J.B."/>
            <person name="Olsen J.V."/>
        </authorList>
    </citation>
    <scope>METHYLATION AT HIS-137</scope>
</reference>
<evidence type="ECO:0000250" key="1">
    <source>
        <dbReference type="UniProtKB" id="P68363"/>
    </source>
</evidence>
<evidence type="ECO:0000250" key="2">
    <source>
        <dbReference type="UniProtKB" id="Q13509"/>
    </source>
</evidence>
<evidence type="ECO:0000269" key="3">
    <source>
    </source>
</evidence>
<evidence type="ECO:0000305" key="4"/>
<accession>P10874</accession>
<accession>C8V2H9</accession>
<accession>Q5AXZ2</accession>
<protein>
    <recommendedName>
        <fullName>Tubulin beta-2 chain</fullName>
    </recommendedName>
    <alternativeName>
        <fullName>Beta-2-tubulin</fullName>
    </alternativeName>
</protein>
<dbReference type="EMBL" id="M17520">
    <property type="protein sequence ID" value="AAA33329.1"/>
    <property type="molecule type" value="Genomic_DNA"/>
</dbReference>
<dbReference type="EMBL" id="AACD01000113">
    <property type="protein sequence ID" value="EAA58237.1"/>
    <property type="molecule type" value="Genomic_DNA"/>
</dbReference>
<dbReference type="EMBL" id="BN001301">
    <property type="protein sequence ID" value="CBF71564.1"/>
    <property type="molecule type" value="Genomic_DNA"/>
</dbReference>
<dbReference type="PIR" id="JQ0172">
    <property type="entry name" value="JQ0172"/>
</dbReference>
<dbReference type="RefSeq" id="XP_664442.1">
    <property type="nucleotide sequence ID" value="XM_659350.1"/>
</dbReference>
<dbReference type="SMR" id="P10874"/>
<dbReference type="FunCoup" id="P10874">
    <property type="interactions" value="1249"/>
</dbReference>
<dbReference type="STRING" id="227321.P10874"/>
<dbReference type="EnsemblFungi" id="CBF71564">
    <property type="protein sequence ID" value="CBF71564"/>
    <property type="gene ID" value="ANIA_06838"/>
</dbReference>
<dbReference type="KEGG" id="ani:ANIA_06838"/>
<dbReference type="VEuPathDB" id="FungiDB:AN6838"/>
<dbReference type="eggNOG" id="KOG1375">
    <property type="taxonomic scope" value="Eukaryota"/>
</dbReference>
<dbReference type="HOGENOM" id="CLU_015718_1_1_1"/>
<dbReference type="InParanoid" id="P10874"/>
<dbReference type="OMA" id="FLTCCAI"/>
<dbReference type="OrthoDB" id="1662883at2759"/>
<dbReference type="Proteomes" id="UP000000560">
    <property type="component" value="Chromosome I"/>
</dbReference>
<dbReference type="GO" id="GO:0005737">
    <property type="term" value="C:cytoplasm"/>
    <property type="evidence" value="ECO:0000318"/>
    <property type="project" value="GO_Central"/>
</dbReference>
<dbReference type="GO" id="GO:0005874">
    <property type="term" value="C:microtubule"/>
    <property type="evidence" value="ECO:0000318"/>
    <property type="project" value="GO_Central"/>
</dbReference>
<dbReference type="GO" id="GO:0045298">
    <property type="term" value="C:tubulin complex"/>
    <property type="evidence" value="ECO:0000266"/>
    <property type="project" value="AspGD"/>
</dbReference>
<dbReference type="GO" id="GO:0005525">
    <property type="term" value="F:GTP binding"/>
    <property type="evidence" value="ECO:0000318"/>
    <property type="project" value="GO_Central"/>
</dbReference>
<dbReference type="GO" id="GO:0003924">
    <property type="term" value="F:GTPase activity"/>
    <property type="evidence" value="ECO:0007669"/>
    <property type="project" value="InterPro"/>
</dbReference>
<dbReference type="GO" id="GO:0046872">
    <property type="term" value="F:metal ion binding"/>
    <property type="evidence" value="ECO:0007669"/>
    <property type="project" value="UniProtKB-KW"/>
</dbReference>
<dbReference type="GO" id="GO:0005200">
    <property type="term" value="F:structural constituent of cytoskeleton"/>
    <property type="evidence" value="ECO:0000266"/>
    <property type="project" value="AspGD"/>
</dbReference>
<dbReference type="GO" id="GO:0048315">
    <property type="term" value="P:conidium formation"/>
    <property type="evidence" value="ECO:0007669"/>
    <property type="project" value="UniProtKB-KW"/>
</dbReference>
<dbReference type="GO" id="GO:0000226">
    <property type="term" value="P:microtubule cytoskeleton organization"/>
    <property type="evidence" value="ECO:0000318"/>
    <property type="project" value="GO_Central"/>
</dbReference>
<dbReference type="GO" id="GO:0007017">
    <property type="term" value="P:microtubule-based process"/>
    <property type="evidence" value="ECO:0000266"/>
    <property type="project" value="AspGD"/>
</dbReference>
<dbReference type="GO" id="GO:0000278">
    <property type="term" value="P:mitotic cell cycle"/>
    <property type="evidence" value="ECO:0000318"/>
    <property type="project" value="GO_Central"/>
</dbReference>
<dbReference type="GO" id="GO:0030435">
    <property type="term" value="P:sporulation resulting in formation of a cellular spore"/>
    <property type="evidence" value="ECO:0007669"/>
    <property type="project" value="UniProtKB-KW"/>
</dbReference>
<dbReference type="CDD" id="cd02187">
    <property type="entry name" value="beta_tubulin"/>
    <property type="match status" value="1"/>
</dbReference>
<dbReference type="FunFam" id="1.10.287.600:FF:000002">
    <property type="entry name" value="Tubulin beta chain"/>
    <property type="match status" value="1"/>
</dbReference>
<dbReference type="FunFam" id="3.30.1330.20:FF:000002">
    <property type="entry name" value="Tubulin beta chain"/>
    <property type="match status" value="1"/>
</dbReference>
<dbReference type="FunFam" id="3.40.50.1440:FF:000009">
    <property type="entry name" value="Tubulin beta chain"/>
    <property type="match status" value="1"/>
</dbReference>
<dbReference type="Gene3D" id="1.10.287.600">
    <property type="entry name" value="Helix hairpin bin"/>
    <property type="match status" value="1"/>
</dbReference>
<dbReference type="Gene3D" id="3.30.1330.20">
    <property type="entry name" value="Tubulin/FtsZ, C-terminal domain"/>
    <property type="match status" value="1"/>
</dbReference>
<dbReference type="Gene3D" id="3.40.50.1440">
    <property type="entry name" value="Tubulin/FtsZ, GTPase domain"/>
    <property type="match status" value="1"/>
</dbReference>
<dbReference type="InterPro" id="IPR013838">
    <property type="entry name" value="Beta-tubulin_BS"/>
</dbReference>
<dbReference type="InterPro" id="IPR002453">
    <property type="entry name" value="Beta_tubulin"/>
</dbReference>
<dbReference type="InterPro" id="IPR008280">
    <property type="entry name" value="Tub_FtsZ_C"/>
</dbReference>
<dbReference type="InterPro" id="IPR000217">
    <property type="entry name" value="Tubulin"/>
</dbReference>
<dbReference type="InterPro" id="IPR037103">
    <property type="entry name" value="Tubulin/FtsZ-like_C"/>
</dbReference>
<dbReference type="InterPro" id="IPR018316">
    <property type="entry name" value="Tubulin/FtsZ_2-layer-sand-dom"/>
</dbReference>
<dbReference type="InterPro" id="IPR036525">
    <property type="entry name" value="Tubulin/FtsZ_GTPase_sf"/>
</dbReference>
<dbReference type="InterPro" id="IPR023123">
    <property type="entry name" value="Tubulin_C"/>
</dbReference>
<dbReference type="InterPro" id="IPR017975">
    <property type="entry name" value="Tubulin_CS"/>
</dbReference>
<dbReference type="InterPro" id="IPR003008">
    <property type="entry name" value="Tubulin_FtsZ_GTPase"/>
</dbReference>
<dbReference type="PANTHER" id="PTHR11588">
    <property type="entry name" value="TUBULIN"/>
    <property type="match status" value="1"/>
</dbReference>
<dbReference type="Pfam" id="PF00091">
    <property type="entry name" value="Tubulin"/>
    <property type="match status" value="1"/>
</dbReference>
<dbReference type="Pfam" id="PF03953">
    <property type="entry name" value="Tubulin_C"/>
    <property type="match status" value="1"/>
</dbReference>
<dbReference type="PRINTS" id="PR01163">
    <property type="entry name" value="BETATUBULIN"/>
</dbReference>
<dbReference type="PRINTS" id="PR01161">
    <property type="entry name" value="TUBULIN"/>
</dbReference>
<dbReference type="SMART" id="SM00864">
    <property type="entry name" value="Tubulin"/>
    <property type="match status" value="1"/>
</dbReference>
<dbReference type="SMART" id="SM00865">
    <property type="entry name" value="Tubulin_C"/>
    <property type="match status" value="1"/>
</dbReference>
<dbReference type="SUPFAM" id="SSF55307">
    <property type="entry name" value="Tubulin C-terminal domain-like"/>
    <property type="match status" value="1"/>
</dbReference>
<dbReference type="SUPFAM" id="SSF52490">
    <property type="entry name" value="Tubulin nucleotide-binding domain-like"/>
    <property type="match status" value="1"/>
</dbReference>
<dbReference type="PROSITE" id="PS00227">
    <property type="entry name" value="TUBULIN"/>
    <property type="match status" value="1"/>
</dbReference>
<dbReference type="PROSITE" id="PS00228">
    <property type="entry name" value="TUBULIN_B_AUTOREG"/>
    <property type="match status" value="1"/>
</dbReference>